<name>FTSB_YERPA</name>
<feature type="chain" id="PRO_1000025740" description="Cell division protein FtsB">
    <location>
        <begin position="1"/>
        <end position="106"/>
    </location>
</feature>
<feature type="topological domain" description="Cytoplasmic" evidence="1">
    <location>
        <begin position="1"/>
        <end position="3"/>
    </location>
</feature>
<feature type="transmembrane region" description="Helical" evidence="1">
    <location>
        <begin position="4"/>
        <end position="21"/>
    </location>
</feature>
<feature type="topological domain" description="Periplasmic" evidence="1">
    <location>
        <begin position="22"/>
        <end position="106"/>
    </location>
</feature>
<feature type="coiled-coil region" evidence="1">
    <location>
        <begin position="31"/>
        <end position="62"/>
    </location>
</feature>
<evidence type="ECO:0000255" key="1">
    <source>
        <dbReference type="HAMAP-Rule" id="MF_00599"/>
    </source>
</evidence>
<keyword id="KW-0131">Cell cycle</keyword>
<keyword id="KW-0132">Cell division</keyword>
<keyword id="KW-0997">Cell inner membrane</keyword>
<keyword id="KW-1003">Cell membrane</keyword>
<keyword id="KW-0175">Coiled coil</keyword>
<keyword id="KW-0472">Membrane</keyword>
<keyword id="KW-0812">Transmembrane</keyword>
<keyword id="KW-1133">Transmembrane helix</keyword>
<dbReference type="EMBL" id="CP000308">
    <property type="protein sequence ID" value="ABG14743.1"/>
    <property type="molecule type" value="Genomic_DNA"/>
</dbReference>
<dbReference type="RefSeq" id="WP_002209390.1">
    <property type="nucleotide sequence ID" value="NZ_CP009906.1"/>
</dbReference>
<dbReference type="SMR" id="Q1C479"/>
<dbReference type="GeneID" id="57975347"/>
<dbReference type="KEGG" id="ypa:YPA_2781"/>
<dbReference type="Proteomes" id="UP000001971">
    <property type="component" value="Chromosome"/>
</dbReference>
<dbReference type="GO" id="GO:0032153">
    <property type="term" value="C:cell division site"/>
    <property type="evidence" value="ECO:0007669"/>
    <property type="project" value="UniProtKB-UniRule"/>
</dbReference>
<dbReference type="GO" id="GO:0030428">
    <property type="term" value="C:cell septum"/>
    <property type="evidence" value="ECO:0007669"/>
    <property type="project" value="TreeGrafter"/>
</dbReference>
<dbReference type="GO" id="GO:0005886">
    <property type="term" value="C:plasma membrane"/>
    <property type="evidence" value="ECO:0007669"/>
    <property type="project" value="UniProtKB-SubCell"/>
</dbReference>
<dbReference type="GO" id="GO:0043093">
    <property type="term" value="P:FtsZ-dependent cytokinesis"/>
    <property type="evidence" value="ECO:0007669"/>
    <property type="project" value="UniProtKB-UniRule"/>
</dbReference>
<dbReference type="Gene3D" id="1.20.5.400">
    <property type="match status" value="1"/>
</dbReference>
<dbReference type="HAMAP" id="MF_00599">
    <property type="entry name" value="FtsB"/>
    <property type="match status" value="1"/>
</dbReference>
<dbReference type="InterPro" id="IPR023081">
    <property type="entry name" value="Cell_div_FtsB"/>
</dbReference>
<dbReference type="InterPro" id="IPR007060">
    <property type="entry name" value="FtsL/DivIC"/>
</dbReference>
<dbReference type="NCBIfam" id="NF002058">
    <property type="entry name" value="PRK00888.1"/>
    <property type="match status" value="1"/>
</dbReference>
<dbReference type="PANTHER" id="PTHR37485">
    <property type="entry name" value="CELL DIVISION PROTEIN FTSB"/>
    <property type="match status" value="1"/>
</dbReference>
<dbReference type="PANTHER" id="PTHR37485:SF1">
    <property type="entry name" value="CELL DIVISION PROTEIN FTSB"/>
    <property type="match status" value="1"/>
</dbReference>
<dbReference type="Pfam" id="PF04977">
    <property type="entry name" value="DivIC"/>
    <property type="match status" value="1"/>
</dbReference>
<gene>
    <name evidence="1" type="primary">ftsB</name>
    <name type="ordered locus">YPA_2781</name>
</gene>
<comment type="function">
    <text evidence="1">Essential cell division protein. May link together the upstream cell division proteins, which are predominantly cytoplasmic, with the downstream cell division proteins, which are predominantly periplasmic.</text>
</comment>
<comment type="subunit">
    <text evidence="1">Part of a complex composed of FtsB, FtsL and FtsQ.</text>
</comment>
<comment type="subcellular location">
    <subcellularLocation>
        <location evidence="1">Cell inner membrane</location>
        <topology evidence="1">Single-pass type II membrane protein</topology>
    </subcellularLocation>
    <text evidence="1">Localizes to the division septum.</text>
</comment>
<comment type="similarity">
    <text evidence="1">Belongs to the FtsB family.</text>
</comment>
<accession>Q1C479</accession>
<proteinExistence type="inferred from homology"/>
<organism>
    <name type="scientific">Yersinia pestis bv. Antiqua (strain Antiqua)</name>
    <dbReference type="NCBI Taxonomy" id="360102"/>
    <lineage>
        <taxon>Bacteria</taxon>
        <taxon>Pseudomonadati</taxon>
        <taxon>Pseudomonadota</taxon>
        <taxon>Gammaproteobacteria</taxon>
        <taxon>Enterobacterales</taxon>
        <taxon>Yersiniaceae</taxon>
        <taxon>Yersinia</taxon>
    </lineage>
</organism>
<reference key="1">
    <citation type="journal article" date="2006" name="J. Bacteriol.">
        <title>Complete genome sequence of Yersinia pestis strains Antiqua and Nepal516: evidence of gene reduction in an emerging pathogen.</title>
        <authorList>
            <person name="Chain P.S.G."/>
            <person name="Hu P."/>
            <person name="Malfatti S.A."/>
            <person name="Radnedge L."/>
            <person name="Larimer F."/>
            <person name="Vergez L.M."/>
            <person name="Worsham P."/>
            <person name="Chu M.C."/>
            <person name="Andersen G.L."/>
        </authorList>
    </citation>
    <scope>NUCLEOTIDE SEQUENCE [LARGE SCALE GENOMIC DNA]</scope>
    <source>
        <strain>Antiqua</strain>
    </source>
</reference>
<protein>
    <recommendedName>
        <fullName evidence="1">Cell division protein FtsB</fullName>
    </recommendedName>
</protein>
<sequence>MGKLTLLLLVLLGWLQYSLWLGKNGIHDFVRVKEDVAAQEANNSTLKARNDQLFAEIDDLNGGQEAIEERARNELGMIKPGESFYRLVPDQSRRNAGTPSTQNNAQ</sequence>